<dbReference type="EMBL" id="U00090">
    <property type="protein sequence ID" value="AAB91615.1"/>
    <property type="molecule type" value="Genomic_DNA"/>
</dbReference>
<dbReference type="RefSeq" id="NP_443777.1">
    <property type="nucleotide sequence ID" value="NC_000914.2"/>
</dbReference>
<dbReference type="SMR" id="P55365"/>
<dbReference type="KEGG" id="rhi:NGR_a00300"/>
<dbReference type="PATRIC" id="fig|394.7.peg.28"/>
<dbReference type="eggNOG" id="COG4453">
    <property type="taxonomic scope" value="Bacteria"/>
</dbReference>
<dbReference type="HOGENOM" id="CLU_152494_3_4_5"/>
<dbReference type="OrthoDB" id="7569726at2"/>
<dbReference type="Proteomes" id="UP000001054">
    <property type="component" value="Plasmid pNGR234a"/>
</dbReference>
<dbReference type="GO" id="GO:0006355">
    <property type="term" value="P:regulation of DNA-templated transcription"/>
    <property type="evidence" value="ECO:0007669"/>
    <property type="project" value="InterPro"/>
</dbReference>
<dbReference type="Gene3D" id="1.20.5.780">
    <property type="entry name" value="Single helix bin"/>
    <property type="match status" value="1"/>
</dbReference>
<dbReference type="InterPro" id="IPR010985">
    <property type="entry name" value="Ribbon_hlx_hlx"/>
</dbReference>
<dbReference type="InterPro" id="IPR014795">
    <property type="entry name" value="TacA_1-like"/>
</dbReference>
<dbReference type="PANTHER" id="PTHR35401:SF2">
    <property type="entry name" value="ABC-TYPE TRANSPORT SYSTEM"/>
    <property type="match status" value="1"/>
</dbReference>
<dbReference type="PANTHER" id="PTHR35401">
    <property type="entry name" value="COPG FAMILY HELIX-TURN-HELIX PROTEIN-RELATED-RELATED"/>
    <property type="match status" value="1"/>
</dbReference>
<dbReference type="Pfam" id="PF08681">
    <property type="entry name" value="TacA1"/>
    <property type="match status" value="1"/>
</dbReference>
<dbReference type="SUPFAM" id="SSF47598">
    <property type="entry name" value="Ribbon-helix-helix"/>
    <property type="match status" value="1"/>
</dbReference>
<proteinExistence type="inferred from homology"/>
<organism>
    <name type="scientific">Sinorhizobium fredii (strain NBRC 101917 / NGR234)</name>
    <dbReference type="NCBI Taxonomy" id="394"/>
    <lineage>
        <taxon>Bacteria</taxon>
        <taxon>Pseudomonadati</taxon>
        <taxon>Pseudomonadota</taxon>
        <taxon>Alphaproteobacteria</taxon>
        <taxon>Hyphomicrobiales</taxon>
        <taxon>Rhizobiaceae</taxon>
        <taxon>Sinorhizobium/Ensifer group</taxon>
        <taxon>Sinorhizobium</taxon>
    </lineage>
</organism>
<reference key="1">
    <citation type="journal article" date="1997" name="Nature">
        <title>Molecular basis of symbiosis between Rhizobium and legumes.</title>
        <authorList>
            <person name="Freiberg C.A."/>
            <person name="Fellay R."/>
            <person name="Bairoch A."/>
            <person name="Broughton W.J."/>
            <person name="Rosenthal A."/>
            <person name="Perret X."/>
        </authorList>
    </citation>
    <scope>NUCLEOTIDE SEQUENCE [LARGE SCALE GENOMIC DNA]</scope>
    <source>
        <strain>NBRC 101917 / NGR234</strain>
    </source>
</reference>
<reference key="2">
    <citation type="journal article" date="2009" name="Appl. Environ. Microbiol.">
        <title>Rhizobium sp. strain NGR234 possesses a remarkable number of secretion systems.</title>
        <authorList>
            <person name="Schmeisser C."/>
            <person name="Liesegang H."/>
            <person name="Krysciak D."/>
            <person name="Bakkou N."/>
            <person name="Le Quere A."/>
            <person name="Wollherr A."/>
            <person name="Heinemeyer I."/>
            <person name="Morgenstern B."/>
            <person name="Pommerening-Roeser A."/>
            <person name="Flores M."/>
            <person name="Palacios R."/>
            <person name="Brenner S."/>
            <person name="Gottschalk G."/>
            <person name="Schmitz R.A."/>
            <person name="Broughton W.J."/>
            <person name="Perret X."/>
            <person name="Strittmatter A.W."/>
            <person name="Streit W.R."/>
        </authorList>
    </citation>
    <scope>NUCLEOTIDE SEQUENCE [LARGE SCALE GENOMIC DNA]</scope>
    <source>
        <strain>NBRC 101917 / NGR234</strain>
    </source>
</reference>
<keyword id="KW-0614">Plasmid</keyword>
<keyword id="KW-1185">Reference proteome</keyword>
<keyword id="KW-1277">Toxin-antitoxin system</keyword>
<sequence length="107" mass="12065">MKEPVMRAIKDVTIDIDEPNTVRMNFRTKERVKRTIQRAAALSGLDDSAFTINAAYQSAIATIAAHEATLLQTTDYQAFFDALDNPPKPTDRLRDAFKRYSETVVSK</sequence>
<geneLocation type="plasmid">
    <name>sym pNGR234a</name>
</geneLocation>
<gene>
    <name evidence="3" type="primary">tacA</name>
    <name type="ordered locus">NGR_a00300</name>
    <name evidence="2" type="ORF">y4aR</name>
</gene>
<protein>
    <recommendedName>
        <fullName evidence="3">Probable antitoxin TacA</fullName>
    </recommendedName>
</protein>
<accession>P55365</accession>
<name>TACA_SINFN</name>
<comment type="function">
    <text evidence="1">Probable antitoxin component of a type II toxin-antitoxin (TA) system. Should neutralize cognate toxin TacT (y4aS).</text>
</comment>
<comment type="subunit">
    <text evidence="1">Forms a complex with cognate antitoxin TacT.</text>
</comment>
<comment type="similarity">
    <text evidence="3">Belongs to the TacA antitoxin family.</text>
</comment>
<evidence type="ECO:0000250" key="1">
    <source>
        <dbReference type="UniProtKB" id="A0A0F6B8D9"/>
    </source>
</evidence>
<evidence type="ECO:0000303" key="2">
    <source>
    </source>
</evidence>
<evidence type="ECO:0000305" key="3"/>
<feature type="chain" id="PRO_0000200802" description="Probable antitoxin TacA">
    <location>
        <begin position="1"/>
        <end position="107"/>
    </location>
</feature>